<reference key="1">
    <citation type="journal article" date="2005" name="Jpn. Agric. Res. Q.">
        <title>Genome sequence of Xanthomonas oryzae pv. oryzae suggests contribution of large numbers of effector genes and insertion sequences to its race diversity.</title>
        <authorList>
            <person name="Ochiai H."/>
            <person name="Inoue Y."/>
            <person name="Takeya M."/>
            <person name="Sasaki A."/>
            <person name="Kaku H."/>
        </authorList>
    </citation>
    <scope>NUCLEOTIDE SEQUENCE [LARGE SCALE GENOMIC DNA]</scope>
    <source>
        <strain>MAFF 311018</strain>
    </source>
</reference>
<keyword id="KW-0997">Cell inner membrane</keyword>
<keyword id="KW-1003">Cell membrane</keyword>
<keyword id="KW-0407">Ion channel</keyword>
<keyword id="KW-0406">Ion transport</keyword>
<keyword id="KW-0472">Membrane</keyword>
<keyword id="KW-0479">Metal-binding</keyword>
<keyword id="KW-0915">Sodium</keyword>
<keyword id="KW-0812">Transmembrane</keyword>
<keyword id="KW-1133">Transmembrane helix</keyword>
<keyword id="KW-0813">Transport</keyword>
<name>FLUC_XANOM</name>
<sequence>MTPIYTIAAISLGASLGALARYGLGLALNAIFPPLPIGTLAANLIAAYVVGVTIAYVGTVPGLSPLWRLFMITGLAGGLSTFSTFTAELFSLLREGRLGMSAGMLGLHVGGSLALLMLGMLTIGLLRKSSLGIAE</sequence>
<gene>
    <name evidence="1" type="primary">fluC</name>
    <name evidence="1" type="synonym">crcB</name>
    <name type="ordered locus">XOO2399</name>
</gene>
<comment type="function">
    <text evidence="1">Fluoride-specific ion channel. Important for reducing fluoride concentration in the cell, thus reducing its toxicity.</text>
</comment>
<comment type="catalytic activity">
    <reaction evidence="1">
        <text>fluoride(in) = fluoride(out)</text>
        <dbReference type="Rhea" id="RHEA:76159"/>
        <dbReference type="ChEBI" id="CHEBI:17051"/>
    </reaction>
    <physiologicalReaction direction="left-to-right" evidence="1">
        <dbReference type="Rhea" id="RHEA:76160"/>
    </physiologicalReaction>
</comment>
<comment type="activity regulation">
    <text evidence="1">Na(+) is not transported, but it plays an essential structural role and its presence is essential for fluoride channel function.</text>
</comment>
<comment type="subcellular location">
    <subcellularLocation>
        <location evidence="1">Cell inner membrane</location>
        <topology evidence="1">Multi-pass membrane protein</topology>
    </subcellularLocation>
</comment>
<comment type="similarity">
    <text evidence="1">Belongs to the fluoride channel Fluc/FEX (TC 1.A.43) family.</text>
</comment>
<protein>
    <recommendedName>
        <fullName evidence="1">Fluoride-specific ion channel FluC</fullName>
    </recommendedName>
</protein>
<evidence type="ECO:0000255" key="1">
    <source>
        <dbReference type="HAMAP-Rule" id="MF_00454"/>
    </source>
</evidence>
<accession>Q2P2S3</accession>
<feature type="chain" id="PRO_0000252961" description="Fluoride-specific ion channel FluC">
    <location>
        <begin position="1"/>
        <end position="135"/>
    </location>
</feature>
<feature type="transmembrane region" description="Helical" evidence="1">
    <location>
        <begin position="7"/>
        <end position="27"/>
    </location>
</feature>
<feature type="transmembrane region" description="Helical" evidence="1">
    <location>
        <begin position="37"/>
        <end position="57"/>
    </location>
</feature>
<feature type="transmembrane region" description="Helical" evidence="1">
    <location>
        <begin position="70"/>
        <end position="90"/>
    </location>
</feature>
<feature type="transmembrane region" description="Helical" evidence="1">
    <location>
        <begin position="105"/>
        <end position="125"/>
    </location>
</feature>
<feature type="binding site" evidence="1">
    <location>
        <position position="77"/>
    </location>
    <ligand>
        <name>Na(+)</name>
        <dbReference type="ChEBI" id="CHEBI:29101"/>
        <note>structural</note>
    </ligand>
</feature>
<feature type="binding site" evidence="1">
    <location>
        <position position="80"/>
    </location>
    <ligand>
        <name>Na(+)</name>
        <dbReference type="ChEBI" id="CHEBI:29101"/>
        <note>structural</note>
    </ligand>
</feature>
<dbReference type="EMBL" id="AP008229">
    <property type="protein sequence ID" value="BAE69154.1"/>
    <property type="molecule type" value="Genomic_DNA"/>
</dbReference>
<dbReference type="RefSeq" id="WP_011408660.1">
    <property type="nucleotide sequence ID" value="NC_007705.1"/>
</dbReference>
<dbReference type="SMR" id="Q2P2S3"/>
<dbReference type="KEGG" id="xom:XOO2399"/>
<dbReference type="HOGENOM" id="CLU_114342_3_3_6"/>
<dbReference type="GO" id="GO:0005886">
    <property type="term" value="C:plasma membrane"/>
    <property type="evidence" value="ECO:0007669"/>
    <property type="project" value="UniProtKB-SubCell"/>
</dbReference>
<dbReference type="GO" id="GO:0062054">
    <property type="term" value="F:fluoride channel activity"/>
    <property type="evidence" value="ECO:0007669"/>
    <property type="project" value="UniProtKB-UniRule"/>
</dbReference>
<dbReference type="GO" id="GO:0046872">
    <property type="term" value="F:metal ion binding"/>
    <property type="evidence" value="ECO:0007669"/>
    <property type="project" value="UniProtKB-KW"/>
</dbReference>
<dbReference type="GO" id="GO:0140114">
    <property type="term" value="P:cellular detoxification of fluoride"/>
    <property type="evidence" value="ECO:0007669"/>
    <property type="project" value="UniProtKB-UniRule"/>
</dbReference>
<dbReference type="HAMAP" id="MF_00454">
    <property type="entry name" value="FluC"/>
    <property type="match status" value="1"/>
</dbReference>
<dbReference type="InterPro" id="IPR003691">
    <property type="entry name" value="FluC"/>
</dbReference>
<dbReference type="NCBIfam" id="NF010792">
    <property type="entry name" value="PRK14196.1"/>
    <property type="match status" value="1"/>
</dbReference>
<dbReference type="PANTHER" id="PTHR28259">
    <property type="entry name" value="FLUORIDE EXPORT PROTEIN 1-RELATED"/>
    <property type="match status" value="1"/>
</dbReference>
<dbReference type="PANTHER" id="PTHR28259:SF1">
    <property type="entry name" value="FLUORIDE EXPORT PROTEIN 1-RELATED"/>
    <property type="match status" value="1"/>
</dbReference>
<dbReference type="Pfam" id="PF02537">
    <property type="entry name" value="CRCB"/>
    <property type="match status" value="1"/>
</dbReference>
<organism>
    <name type="scientific">Xanthomonas oryzae pv. oryzae (strain MAFF 311018)</name>
    <dbReference type="NCBI Taxonomy" id="342109"/>
    <lineage>
        <taxon>Bacteria</taxon>
        <taxon>Pseudomonadati</taxon>
        <taxon>Pseudomonadota</taxon>
        <taxon>Gammaproteobacteria</taxon>
        <taxon>Lysobacterales</taxon>
        <taxon>Lysobacteraceae</taxon>
        <taxon>Xanthomonas</taxon>
    </lineage>
</organism>
<proteinExistence type="inferred from homology"/>